<feature type="initiator methionine" description="Removed" evidence="1">
    <location>
        <position position="1"/>
    </location>
</feature>
<feature type="chain" id="PRO_0000063559" description="Chaperonin GroEL">
    <location>
        <begin position="2"/>
        <end position="543"/>
    </location>
</feature>
<feature type="binding site" evidence="2">
    <location>
        <begin position="29"/>
        <end position="32"/>
    </location>
    <ligand>
        <name>ATP</name>
        <dbReference type="ChEBI" id="CHEBI:30616"/>
    </ligand>
</feature>
<feature type="binding site" evidence="2">
    <location>
        <begin position="86"/>
        <end position="90"/>
    </location>
    <ligand>
        <name>ATP</name>
        <dbReference type="ChEBI" id="CHEBI:30616"/>
    </ligand>
</feature>
<feature type="binding site" evidence="2">
    <location>
        <position position="413"/>
    </location>
    <ligand>
        <name>ATP</name>
        <dbReference type="ChEBI" id="CHEBI:30616"/>
    </ligand>
</feature>
<feature type="binding site" evidence="2">
    <location>
        <begin position="476"/>
        <end position="478"/>
    </location>
    <ligand>
        <name>ATP</name>
        <dbReference type="ChEBI" id="CHEBI:30616"/>
    </ligand>
</feature>
<feature type="binding site" evidence="2">
    <location>
        <position position="492"/>
    </location>
    <ligand>
        <name>ATP</name>
        <dbReference type="ChEBI" id="CHEBI:30616"/>
    </ligand>
</feature>
<proteinExistence type="inferred from homology"/>
<sequence>MAKDIKFSADARAAMVRGVDMLADTVKVTLGPKGRNVVLEKAFGSPLITNDGVTIAKEIELEDHFENMGAKLVSEVASKTNDIAGDGTTTATVLTQAIVHEGLKNVTAGANPIGIRRGIETATATAVEALKAIAQPVSGKEAIAQVAAVSSRSEKVGEYISEAMERVGNDGVITIEESRGMETELEVVEGMQFDRGYLSQYMVTDNEKMVADLENPFILITDKKVSNIQDILPLLEEVLKTNRPLLIIADDVDGEALPTLVLNKIRGTFNVVAVKAPGFGDRRKAMLEDIAILTGGTVITEDLGLELKDATMTALGQAAKITVDKDSTVIVEGSGSSEAIANRIALIKSQLETTTSDFDREKLQERLAKLGGGVAVIKVGAPTETALKEMKLRIEDALNATRAAVEEGIVAGGGTALITVIEKVAALELEGDDATGRNIVLRALEEPVRQIALNAGYEGSVVIDKLKNSPAGTGFNAATGEWVDMIKTGIIDPVKVTRSALQNAASVASLILTTEAVVANKPEPAAPAPAMPAGMDPGMMGGF</sequence>
<dbReference type="EC" id="5.6.1.7" evidence="2"/>
<dbReference type="EMBL" id="AE014074">
    <property type="protein sequence ID" value="AAM80372.1"/>
    <property type="molecule type" value="Genomic_DNA"/>
</dbReference>
<dbReference type="RefSeq" id="WP_011055068.1">
    <property type="nucleotide sequence ID" value="NC_004070.1"/>
</dbReference>
<dbReference type="SMR" id="P0DA22"/>
<dbReference type="KEGG" id="spg:SpyM3_1765"/>
<dbReference type="HOGENOM" id="CLU_016503_3_0_9"/>
<dbReference type="Proteomes" id="UP000000564">
    <property type="component" value="Chromosome"/>
</dbReference>
<dbReference type="GO" id="GO:0005737">
    <property type="term" value="C:cytoplasm"/>
    <property type="evidence" value="ECO:0007669"/>
    <property type="project" value="UniProtKB-SubCell"/>
</dbReference>
<dbReference type="GO" id="GO:0005524">
    <property type="term" value="F:ATP binding"/>
    <property type="evidence" value="ECO:0007669"/>
    <property type="project" value="UniProtKB-UniRule"/>
</dbReference>
<dbReference type="GO" id="GO:0140662">
    <property type="term" value="F:ATP-dependent protein folding chaperone"/>
    <property type="evidence" value="ECO:0007669"/>
    <property type="project" value="InterPro"/>
</dbReference>
<dbReference type="GO" id="GO:0016853">
    <property type="term" value="F:isomerase activity"/>
    <property type="evidence" value="ECO:0007669"/>
    <property type="project" value="UniProtKB-KW"/>
</dbReference>
<dbReference type="GO" id="GO:0051082">
    <property type="term" value="F:unfolded protein binding"/>
    <property type="evidence" value="ECO:0007669"/>
    <property type="project" value="UniProtKB-UniRule"/>
</dbReference>
<dbReference type="GO" id="GO:0042026">
    <property type="term" value="P:protein refolding"/>
    <property type="evidence" value="ECO:0007669"/>
    <property type="project" value="UniProtKB-UniRule"/>
</dbReference>
<dbReference type="CDD" id="cd03344">
    <property type="entry name" value="GroEL"/>
    <property type="match status" value="1"/>
</dbReference>
<dbReference type="FunFam" id="1.10.560.10:FF:000001">
    <property type="entry name" value="60 kDa chaperonin"/>
    <property type="match status" value="1"/>
</dbReference>
<dbReference type="FunFam" id="3.50.7.10:FF:000001">
    <property type="entry name" value="60 kDa chaperonin"/>
    <property type="match status" value="1"/>
</dbReference>
<dbReference type="Gene3D" id="3.50.7.10">
    <property type="entry name" value="GroEL"/>
    <property type="match status" value="1"/>
</dbReference>
<dbReference type="Gene3D" id="1.10.560.10">
    <property type="entry name" value="GroEL-like equatorial domain"/>
    <property type="match status" value="1"/>
</dbReference>
<dbReference type="Gene3D" id="3.30.260.10">
    <property type="entry name" value="TCP-1-like chaperonin intermediate domain"/>
    <property type="match status" value="1"/>
</dbReference>
<dbReference type="HAMAP" id="MF_00600">
    <property type="entry name" value="CH60"/>
    <property type="match status" value="1"/>
</dbReference>
<dbReference type="InterPro" id="IPR018370">
    <property type="entry name" value="Chaperonin_Cpn60_CS"/>
</dbReference>
<dbReference type="InterPro" id="IPR001844">
    <property type="entry name" value="Cpn60/GroEL"/>
</dbReference>
<dbReference type="InterPro" id="IPR002423">
    <property type="entry name" value="Cpn60/GroEL/TCP-1"/>
</dbReference>
<dbReference type="InterPro" id="IPR027409">
    <property type="entry name" value="GroEL-like_apical_dom_sf"/>
</dbReference>
<dbReference type="InterPro" id="IPR027413">
    <property type="entry name" value="GROEL-like_equatorial_sf"/>
</dbReference>
<dbReference type="InterPro" id="IPR027410">
    <property type="entry name" value="TCP-1-like_intermed_sf"/>
</dbReference>
<dbReference type="NCBIfam" id="TIGR02348">
    <property type="entry name" value="GroEL"/>
    <property type="match status" value="1"/>
</dbReference>
<dbReference type="NCBIfam" id="NF000592">
    <property type="entry name" value="PRK00013.1"/>
    <property type="match status" value="1"/>
</dbReference>
<dbReference type="NCBIfam" id="NF009487">
    <property type="entry name" value="PRK12849.1"/>
    <property type="match status" value="1"/>
</dbReference>
<dbReference type="NCBIfam" id="NF009488">
    <property type="entry name" value="PRK12850.1"/>
    <property type="match status" value="1"/>
</dbReference>
<dbReference type="NCBIfam" id="NF009489">
    <property type="entry name" value="PRK12851.1"/>
    <property type="match status" value="1"/>
</dbReference>
<dbReference type="PANTHER" id="PTHR45633">
    <property type="entry name" value="60 KDA HEAT SHOCK PROTEIN, MITOCHONDRIAL"/>
    <property type="match status" value="1"/>
</dbReference>
<dbReference type="Pfam" id="PF00118">
    <property type="entry name" value="Cpn60_TCP1"/>
    <property type="match status" value="1"/>
</dbReference>
<dbReference type="PRINTS" id="PR00298">
    <property type="entry name" value="CHAPERONIN60"/>
</dbReference>
<dbReference type="SUPFAM" id="SSF52029">
    <property type="entry name" value="GroEL apical domain-like"/>
    <property type="match status" value="1"/>
</dbReference>
<dbReference type="SUPFAM" id="SSF48592">
    <property type="entry name" value="GroEL equatorial domain-like"/>
    <property type="match status" value="1"/>
</dbReference>
<dbReference type="SUPFAM" id="SSF54849">
    <property type="entry name" value="GroEL-intermediate domain like"/>
    <property type="match status" value="1"/>
</dbReference>
<dbReference type="PROSITE" id="PS00296">
    <property type="entry name" value="CHAPERONINS_CPN60"/>
    <property type="match status" value="1"/>
</dbReference>
<gene>
    <name evidence="2" type="primary">groEL</name>
    <name evidence="2" type="synonym">groL</name>
    <name type="ordered locus">SpyM3_1765</name>
</gene>
<organism>
    <name type="scientific">Streptococcus pyogenes serotype M3 (strain ATCC BAA-595 / MGAS315)</name>
    <dbReference type="NCBI Taxonomy" id="198466"/>
    <lineage>
        <taxon>Bacteria</taxon>
        <taxon>Bacillati</taxon>
        <taxon>Bacillota</taxon>
        <taxon>Bacilli</taxon>
        <taxon>Lactobacillales</taxon>
        <taxon>Streptococcaceae</taxon>
        <taxon>Streptococcus</taxon>
    </lineage>
</organism>
<reference key="1">
    <citation type="journal article" date="2002" name="Proc. Natl. Acad. Sci. U.S.A.">
        <title>Genome sequence of a serotype M3 strain of group A Streptococcus: phage-encoded toxins, the high-virulence phenotype, and clone emergence.</title>
        <authorList>
            <person name="Beres S.B."/>
            <person name="Sylva G.L."/>
            <person name="Barbian K.D."/>
            <person name="Lei B."/>
            <person name="Hoff J.S."/>
            <person name="Mammarella N.D."/>
            <person name="Liu M.-Y."/>
            <person name="Smoot J.C."/>
            <person name="Porcella S.F."/>
            <person name="Parkins L.D."/>
            <person name="Campbell D.S."/>
            <person name="Smith T.M."/>
            <person name="McCormick J.K."/>
            <person name="Leung D.Y.M."/>
            <person name="Schlievert P.M."/>
            <person name="Musser J.M."/>
        </authorList>
    </citation>
    <scope>NUCLEOTIDE SEQUENCE [LARGE SCALE GENOMIC DNA]</scope>
    <source>
        <strain>ATCC BAA-595 / MGAS315</strain>
    </source>
</reference>
<keyword id="KW-0067">ATP-binding</keyword>
<keyword id="KW-0143">Chaperone</keyword>
<keyword id="KW-0963">Cytoplasm</keyword>
<keyword id="KW-0413">Isomerase</keyword>
<keyword id="KW-0547">Nucleotide-binding</keyword>
<name>CH60_STRP3</name>
<protein>
    <recommendedName>
        <fullName evidence="2">Chaperonin GroEL</fullName>
        <ecNumber evidence="2">5.6.1.7</ecNumber>
    </recommendedName>
    <alternativeName>
        <fullName evidence="2">60 kDa chaperonin</fullName>
    </alternativeName>
    <alternativeName>
        <fullName evidence="2">Chaperonin-60</fullName>
        <shortName evidence="2">Cpn60</shortName>
    </alternativeName>
</protein>
<accession>P0DA22</accession>
<accession>Q8K5M5</accession>
<evidence type="ECO:0000250" key="1"/>
<evidence type="ECO:0000255" key="2">
    <source>
        <dbReference type="HAMAP-Rule" id="MF_00600"/>
    </source>
</evidence>
<comment type="function">
    <text evidence="2">Together with its co-chaperonin GroES, plays an essential role in assisting protein folding. The GroEL-GroES system forms a nano-cage that allows encapsulation of the non-native substrate proteins and provides a physical environment optimized to promote and accelerate protein folding.</text>
</comment>
<comment type="catalytic activity">
    <reaction evidence="2">
        <text>ATP + H2O + a folded polypeptide = ADP + phosphate + an unfolded polypeptide.</text>
        <dbReference type="EC" id="5.6.1.7"/>
    </reaction>
</comment>
<comment type="subunit">
    <text evidence="2">Forms a cylinder of 14 subunits composed of two heptameric rings stacked back-to-back. Interacts with the co-chaperonin GroES.</text>
</comment>
<comment type="subcellular location">
    <subcellularLocation>
        <location evidence="2">Cytoplasm</location>
    </subcellularLocation>
</comment>
<comment type="similarity">
    <text evidence="2">Belongs to the chaperonin (HSP60) family.</text>
</comment>